<accession>A2R919</accession>
<organism>
    <name type="scientific">Aspergillus niger (strain ATCC MYA-4892 / CBS 513.88 / FGSC A1513)</name>
    <dbReference type="NCBI Taxonomy" id="425011"/>
    <lineage>
        <taxon>Eukaryota</taxon>
        <taxon>Fungi</taxon>
        <taxon>Dikarya</taxon>
        <taxon>Ascomycota</taxon>
        <taxon>Pezizomycotina</taxon>
        <taxon>Eurotiomycetes</taxon>
        <taxon>Eurotiomycetidae</taxon>
        <taxon>Eurotiales</taxon>
        <taxon>Aspergillaceae</taxon>
        <taxon>Aspergillus</taxon>
        <taxon>Aspergillus subgen. Circumdati</taxon>
    </lineage>
</organism>
<sequence>MQCYTEILPPTGVTHALAVPFLAATSDDLIVVRTSLLQIYSLHKVASHAEGADAQQESTKLLLEKEYSLSGTVTGLCRVKVLNSKSGGEAVLVAFRNAKLSLIEWDPERRGISTISIHYYERDDLTRSPWVPDLNNCGSILSVDPSSRCAIFNFGIRNLAIIPFHQPGDDLVMDDYGSDLGEGISTDHDLGGGTVADKAKEGIVYQTPYAPSFVLPLTTLDPSILHPISLAFLYEYREPTFGILYSQVATSSALLPERKDVVFYTVFTLDLEQQASTVLLSVSRLPSDLFRVVALPPPVGGALLIGSNELVHIDQAGKTNAVGVNEFSRQVSSFSMTDQSDLALRLENCIVECLGDSSGDMLLVLTTGEMAIVKFKLDGRSVSGISVHLLPAHAGLTSIYSAAAASTFIGDGKIFLGSEDGDSVLLGYSYSSSSTKKHRLQAKQVIDDSADMSEEDQSDDDVYEDDLYSTSPDTTLTGRRPSGESSAFGLYDFRIHDKLINIGPLRDITMGKRLSTNLEKTGDRTNSTSPELQIVASQGSHKSGGLVVMAREIDPHVVASISLESVDCIWTASLTREEEAVSGTSEKMGQQSQRCYVIATEVKGSDREESLIFVVDGHDLKPFRAPDFNPNEDVTISVGTQESRKRVVQVLKNEVRSYDFDLSLTQIYPIWDDDTNDERMAVSASLADSCLAILRDDSTLLFLQADDSGDLDEVVFGEDVASGKWISCCLYSDKTGMFSSIDRTLSEPVKNDMFLFLLSHDCKLFVYRVRDQKLLSIIEGTDGLSPLLSSEPPKRSGTRENLIEAIVADLGETWSASPYLILRSETDDLIIYKPFVVSTGPVEGIHSLKFSKETNSVLPRIPPGVSSTQPSGSDYRARPLRILPDISGLSAVFMPGASAGFIIRTSASAPHFLRLRGENSRSSTVRFCKLPPMTRFDYQWTLKRVHLGEQVDHLAYSTSSGMYVLGTCHATDFKLPEDDELHPEWRNEAISFFPSARGSFIKLVWDHHLQRQDSVILIFHLHSFSLGADEYVMAIKNISLEVSENTHERKDMIVVGTAFARGEDIPSRGCIYVFEVVQVVPDPDHPETDRKLKLIGKEPVKGAVTALSEIGGQGFVLVAQGQKCMVRGLKEDGSLLPVAFMDMQCYVSVVKELKGTGMCILGDAVKGVWFAGYSEEPYKMSLFAKDLDYLEVCAAEFLPDGKRLFIVVADSDCNIHVLQYDPEDPKSSNGDRLLSRSKFHMGNFASTLTLLPRTMVSSEKMVSSSDGMDIDNQSPLHQVLMTTQNGSLGLITCIPEESYRRLSALQSQLTNTLEHPCGLNPRAFRAVESDGTAGRGMLDGNLLFKWIDMSKQRKTEIAGRVGAREWEIKADLEAISGDGLGYL</sequence>
<name>CFT1_ASPNC</name>
<dbReference type="EMBL" id="AM270382">
    <property type="protein sequence ID" value="CAK47110.1"/>
    <property type="molecule type" value="Genomic_DNA"/>
</dbReference>
<dbReference type="SMR" id="A2R919"/>
<dbReference type="EnsemblFungi" id="CAK47110">
    <property type="protein sequence ID" value="CAK47110"/>
    <property type="gene ID" value="An16g09140"/>
</dbReference>
<dbReference type="HOGENOM" id="CLU_002414_2_1_1"/>
<dbReference type="Proteomes" id="UP000006706">
    <property type="component" value="Chromosome 5R"/>
</dbReference>
<dbReference type="GO" id="GO:0005634">
    <property type="term" value="C:nucleus"/>
    <property type="evidence" value="ECO:0007669"/>
    <property type="project" value="UniProtKB-SubCell"/>
</dbReference>
<dbReference type="GO" id="GO:0003723">
    <property type="term" value="F:RNA binding"/>
    <property type="evidence" value="ECO:0007669"/>
    <property type="project" value="UniProtKB-KW"/>
</dbReference>
<dbReference type="GO" id="GO:0006397">
    <property type="term" value="P:mRNA processing"/>
    <property type="evidence" value="ECO:0007669"/>
    <property type="project" value="UniProtKB-KW"/>
</dbReference>
<dbReference type="FunFam" id="2.130.10.10:FF:000625">
    <property type="entry name" value="mRNA cleavage and polyadenylation factor subunit"/>
    <property type="match status" value="1"/>
</dbReference>
<dbReference type="FunFam" id="2.130.10.10:FF:000788">
    <property type="entry name" value="mRNA cleavage and polyadenylation factor subunit"/>
    <property type="match status" value="1"/>
</dbReference>
<dbReference type="Gene3D" id="2.130.10.10">
    <property type="entry name" value="YVTN repeat-like/Quinoprotein amine dehydrogenase"/>
    <property type="match status" value="2"/>
</dbReference>
<dbReference type="InterPro" id="IPR018846">
    <property type="entry name" value="Beta-prop_RSE1/DDB1/CPSF1_1st"/>
</dbReference>
<dbReference type="InterPro" id="IPR004871">
    <property type="entry name" value="Cleavage/polyA-sp_fac_asu_C"/>
</dbReference>
<dbReference type="InterPro" id="IPR050358">
    <property type="entry name" value="RSE1/DDB1/CFT1/CPSF1"/>
</dbReference>
<dbReference type="InterPro" id="IPR015943">
    <property type="entry name" value="WD40/YVTN_repeat-like_dom_sf"/>
</dbReference>
<dbReference type="PANTHER" id="PTHR10644">
    <property type="entry name" value="DNA REPAIR/RNA PROCESSING CPSF FAMILY"/>
    <property type="match status" value="1"/>
</dbReference>
<dbReference type="Pfam" id="PF10433">
    <property type="entry name" value="Beta-prop_RSE1_1st"/>
    <property type="match status" value="1"/>
</dbReference>
<dbReference type="Pfam" id="PF03178">
    <property type="entry name" value="CPSF_A"/>
    <property type="match status" value="1"/>
</dbReference>
<comment type="function">
    <text evidence="1">RNA-binding component of the cleavage and polyadenylation factor (CPF) complex, which plays a key role in polyadenylation-dependent pre-mRNA 3'-end formation and cooperates with cleavage factors including the CFIA complex and NAB4/CFIB. Involved in poly(A) site recognition. May be involved in coupling transcription termination and mRNA 3'-end formation (By similarity).</text>
</comment>
<comment type="subcellular location">
    <subcellularLocation>
        <location evidence="1">Nucleus</location>
    </subcellularLocation>
</comment>
<comment type="similarity">
    <text evidence="3">Belongs to the CFT1 family.</text>
</comment>
<proteinExistence type="inferred from homology"/>
<keyword id="KW-0507">mRNA processing</keyword>
<keyword id="KW-0539">Nucleus</keyword>
<keyword id="KW-1185">Reference proteome</keyword>
<keyword id="KW-0694">RNA-binding</keyword>
<gene>
    <name type="primary">cft1</name>
    <name type="ORF">An16g09140</name>
</gene>
<feature type="chain" id="PRO_0000290623" description="Protein cft1">
    <location>
        <begin position="1"/>
        <end position="1383"/>
    </location>
</feature>
<feature type="region of interest" description="Disordered" evidence="2">
    <location>
        <begin position="441"/>
        <end position="482"/>
    </location>
</feature>
<feature type="compositionally biased region" description="Acidic residues" evidence="2">
    <location>
        <begin position="448"/>
        <end position="467"/>
    </location>
</feature>
<reference key="1">
    <citation type="journal article" date="2007" name="Nat. Biotechnol.">
        <title>Genome sequencing and analysis of the versatile cell factory Aspergillus niger CBS 513.88.</title>
        <authorList>
            <person name="Pel H.J."/>
            <person name="de Winde J.H."/>
            <person name="Archer D.B."/>
            <person name="Dyer P.S."/>
            <person name="Hofmann G."/>
            <person name="Schaap P.J."/>
            <person name="Turner G."/>
            <person name="de Vries R.P."/>
            <person name="Albang R."/>
            <person name="Albermann K."/>
            <person name="Andersen M.R."/>
            <person name="Bendtsen J.D."/>
            <person name="Benen J.A.E."/>
            <person name="van den Berg M."/>
            <person name="Breestraat S."/>
            <person name="Caddick M.X."/>
            <person name="Contreras R."/>
            <person name="Cornell M."/>
            <person name="Coutinho P.M."/>
            <person name="Danchin E.G.J."/>
            <person name="Debets A.J.M."/>
            <person name="Dekker P."/>
            <person name="van Dijck P.W.M."/>
            <person name="van Dijk A."/>
            <person name="Dijkhuizen L."/>
            <person name="Driessen A.J.M."/>
            <person name="d'Enfert C."/>
            <person name="Geysens S."/>
            <person name="Goosen C."/>
            <person name="Groot G.S.P."/>
            <person name="de Groot P.W.J."/>
            <person name="Guillemette T."/>
            <person name="Henrissat B."/>
            <person name="Herweijer M."/>
            <person name="van den Hombergh J.P.T.W."/>
            <person name="van den Hondel C.A.M.J.J."/>
            <person name="van der Heijden R.T.J.M."/>
            <person name="van der Kaaij R.M."/>
            <person name="Klis F.M."/>
            <person name="Kools H.J."/>
            <person name="Kubicek C.P."/>
            <person name="van Kuyk P.A."/>
            <person name="Lauber J."/>
            <person name="Lu X."/>
            <person name="van der Maarel M.J.E.C."/>
            <person name="Meulenberg R."/>
            <person name="Menke H."/>
            <person name="Mortimer M.A."/>
            <person name="Nielsen J."/>
            <person name="Oliver S.G."/>
            <person name="Olsthoorn M."/>
            <person name="Pal K."/>
            <person name="van Peij N.N.M.E."/>
            <person name="Ram A.F.J."/>
            <person name="Rinas U."/>
            <person name="Roubos J.A."/>
            <person name="Sagt C.M.J."/>
            <person name="Schmoll M."/>
            <person name="Sun J."/>
            <person name="Ussery D."/>
            <person name="Varga J."/>
            <person name="Vervecken W."/>
            <person name="van de Vondervoort P.J.J."/>
            <person name="Wedler H."/>
            <person name="Woesten H.A.B."/>
            <person name="Zeng A.-P."/>
            <person name="van Ooyen A.J.J."/>
            <person name="Visser J."/>
            <person name="Stam H."/>
        </authorList>
    </citation>
    <scope>NUCLEOTIDE SEQUENCE [LARGE SCALE GENOMIC DNA]</scope>
    <source>
        <strain>ATCC MYA-4892 / CBS 513.88 / FGSC A1513</strain>
    </source>
</reference>
<protein>
    <recommendedName>
        <fullName>Protein cft1</fullName>
    </recommendedName>
    <alternativeName>
        <fullName>Cleavage factor two protein 1</fullName>
    </alternativeName>
</protein>
<evidence type="ECO:0000250" key="1"/>
<evidence type="ECO:0000256" key="2">
    <source>
        <dbReference type="SAM" id="MobiDB-lite"/>
    </source>
</evidence>
<evidence type="ECO:0000305" key="3"/>